<comment type="function">
    <text evidence="1">Forms oxaloacetate, a four-carbon dicarboxylic acid source for the tricarboxylic acid cycle.</text>
</comment>
<comment type="catalytic activity">
    <reaction evidence="1">
        <text>oxaloacetate + phosphate = phosphoenolpyruvate + hydrogencarbonate</text>
        <dbReference type="Rhea" id="RHEA:28370"/>
        <dbReference type="ChEBI" id="CHEBI:16452"/>
        <dbReference type="ChEBI" id="CHEBI:17544"/>
        <dbReference type="ChEBI" id="CHEBI:43474"/>
        <dbReference type="ChEBI" id="CHEBI:58702"/>
        <dbReference type="EC" id="4.1.1.31"/>
    </reaction>
</comment>
<comment type="cofactor">
    <cofactor evidence="1">
        <name>Mg(2+)</name>
        <dbReference type="ChEBI" id="CHEBI:18420"/>
    </cofactor>
</comment>
<comment type="similarity">
    <text evidence="1">Belongs to the PEPCase type 1 family.</text>
</comment>
<dbReference type="EC" id="4.1.1.31" evidence="1"/>
<dbReference type="EMBL" id="CU928164">
    <property type="protein sequence ID" value="CAR19152.1"/>
    <property type="molecule type" value="Genomic_DNA"/>
</dbReference>
<dbReference type="RefSeq" id="WP_001005578.1">
    <property type="nucleotide sequence ID" value="NC_011750.1"/>
</dbReference>
<dbReference type="RefSeq" id="YP_002408963.1">
    <property type="nucleotide sequence ID" value="NC_011750.1"/>
</dbReference>
<dbReference type="SMR" id="B7NU44"/>
<dbReference type="STRING" id="585057.ECIAI39_3033"/>
<dbReference type="KEGG" id="ect:ECIAI39_3033"/>
<dbReference type="PATRIC" id="fig|585057.6.peg.3145"/>
<dbReference type="HOGENOM" id="CLU_006557_2_0_6"/>
<dbReference type="Proteomes" id="UP000000749">
    <property type="component" value="Chromosome"/>
</dbReference>
<dbReference type="GO" id="GO:0005829">
    <property type="term" value="C:cytosol"/>
    <property type="evidence" value="ECO:0007669"/>
    <property type="project" value="TreeGrafter"/>
</dbReference>
<dbReference type="GO" id="GO:0000287">
    <property type="term" value="F:magnesium ion binding"/>
    <property type="evidence" value="ECO:0007669"/>
    <property type="project" value="UniProtKB-UniRule"/>
</dbReference>
<dbReference type="GO" id="GO:0008964">
    <property type="term" value="F:phosphoenolpyruvate carboxylase activity"/>
    <property type="evidence" value="ECO:0007669"/>
    <property type="project" value="UniProtKB-UniRule"/>
</dbReference>
<dbReference type="GO" id="GO:0015977">
    <property type="term" value="P:carbon fixation"/>
    <property type="evidence" value="ECO:0007669"/>
    <property type="project" value="UniProtKB-UniRule"/>
</dbReference>
<dbReference type="GO" id="GO:0006107">
    <property type="term" value="P:oxaloacetate metabolic process"/>
    <property type="evidence" value="ECO:0007669"/>
    <property type="project" value="UniProtKB-UniRule"/>
</dbReference>
<dbReference type="GO" id="GO:0006099">
    <property type="term" value="P:tricarboxylic acid cycle"/>
    <property type="evidence" value="ECO:0007669"/>
    <property type="project" value="InterPro"/>
</dbReference>
<dbReference type="FunFam" id="1.20.1440.90:FF:000002">
    <property type="entry name" value="Phosphoenolpyruvate carboxylase"/>
    <property type="match status" value="1"/>
</dbReference>
<dbReference type="Gene3D" id="1.20.1440.90">
    <property type="entry name" value="Phosphoenolpyruvate/pyruvate domain"/>
    <property type="match status" value="1"/>
</dbReference>
<dbReference type="HAMAP" id="MF_00595">
    <property type="entry name" value="PEPcase_type1"/>
    <property type="match status" value="1"/>
</dbReference>
<dbReference type="InterPro" id="IPR021135">
    <property type="entry name" value="PEP_COase"/>
</dbReference>
<dbReference type="InterPro" id="IPR022805">
    <property type="entry name" value="PEP_COase_bac/pln-type"/>
</dbReference>
<dbReference type="InterPro" id="IPR018129">
    <property type="entry name" value="PEP_COase_Lys_AS"/>
</dbReference>
<dbReference type="InterPro" id="IPR033129">
    <property type="entry name" value="PEPCASE_His_AS"/>
</dbReference>
<dbReference type="InterPro" id="IPR015813">
    <property type="entry name" value="Pyrv/PenolPyrv_kinase-like_dom"/>
</dbReference>
<dbReference type="NCBIfam" id="NF000584">
    <property type="entry name" value="PRK00009.1"/>
    <property type="match status" value="1"/>
</dbReference>
<dbReference type="PANTHER" id="PTHR30523">
    <property type="entry name" value="PHOSPHOENOLPYRUVATE CARBOXYLASE"/>
    <property type="match status" value="1"/>
</dbReference>
<dbReference type="PANTHER" id="PTHR30523:SF6">
    <property type="entry name" value="PHOSPHOENOLPYRUVATE CARBOXYLASE"/>
    <property type="match status" value="1"/>
</dbReference>
<dbReference type="Pfam" id="PF00311">
    <property type="entry name" value="PEPcase"/>
    <property type="match status" value="1"/>
</dbReference>
<dbReference type="PRINTS" id="PR00150">
    <property type="entry name" value="PEPCARBXLASE"/>
</dbReference>
<dbReference type="SUPFAM" id="SSF51621">
    <property type="entry name" value="Phosphoenolpyruvate/pyruvate domain"/>
    <property type="match status" value="1"/>
</dbReference>
<dbReference type="PROSITE" id="PS00781">
    <property type="entry name" value="PEPCASE_1"/>
    <property type="match status" value="1"/>
</dbReference>
<dbReference type="PROSITE" id="PS00393">
    <property type="entry name" value="PEPCASE_2"/>
    <property type="match status" value="1"/>
</dbReference>
<feature type="chain" id="PRO_1000129827" description="Phosphoenolpyruvate carboxylase">
    <location>
        <begin position="1"/>
        <end position="883"/>
    </location>
</feature>
<feature type="active site" evidence="1">
    <location>
        <position position="138"/>
    </location>
</feature>
<feature type="active site" evidence="1">
    <location>
        <position position="546"/>
    </location>
</feature>
<name>CAPP_ECO7I</name>
<reference key="1">
    <citation type="journal article" date="2009" name="PLoS Genet.">
        <title>Organised genome dynamics in the Escherichia coli species results in highly diverse adaptive paths.</title>
        <authorList>
            <person name="Touchon M."/>
            <person name="Hoede C."/>
            <person name="Tenaillon O."/>
            <person name="Barbe V."/>
            <person name="Baeriswyl S."/>
            <person name="Bidet P."/>
            <person name="Bingen E."/>
            <person name="Bonacorsi S."/>
            <person name="Bouchier C."/>
            <person name="Bouvet O."/>
            <person name="Calteau A."/>
            <person name="Chiapello H."/>
            <person name="Clermont O."/>
            <person name="Cruveiller S."/>
            <person name="Danchin A."/>
            <person name="Diard M."/>
            <person name="Dossat C."/>
            <person name="Karoui M.E."/>
            <person name="Frapy E."/>
            <person name="Garry L."/>
            <person name="Ghigo J.M."/>
            <person name="Gilles A.M."/>
            <person name="Johnson J."/>
            <person name="Le Bouguenec C."/>
            <person name="Lescat M."/>
            <person name="Mangenot S."/>
            <person name="Martinez-Jehanne V."/>
            <person name="Matic I."/>
            <person name="Nassif X."/>
            <person name="Oztas S."/>
            <person name="Petit M.A."/>
            <person name="Pichon C."/>
            <person name="Rouy Z."/>
            <person name="Ruf C.S."/>
            <person name="Schneider D."/>
            <person name="Tourret J."/>
            <person name="Vacherie B."/>
            <person name="Vallenet D."/>
            <person name="Medigue C."/>
            <person name="Rocha E.P.C."/>
            <person name="Denamur E."/>
        </authorList>
    </citation>
    <scope>NUCLEOTIDE SEQUENCE [LARGE SCALE GENOMIC DNA]</scope>
    <source>
        <strain>IAI39 / ExPEC</strain>
    </source>
</reference>
<keyword id="KW-0120">Carbon dioxide fixation</keyword>
<keyword id="KW-0456">Lyase</keyword>
<keyword id="KW-0460">Magnesium</keyword>
<sequence>MNEQYSALRSNVSMLGKVLGETIKDALGEHILERVETIRKLSKSSRAGNDANRQELLTTLQNLSNDELLPVARAFSQFLNLANTAEQYHSISPKGEAASNPEVIARTLRKLKNQPELSEDTIKKAVESLSLELVLTAHPTEITRRTLIHKMVEVNACLKQLDNKDIADYEHNQLMRRLRQLIAQSWHTDEIRKLRPSPVDEAKWGFAVVENSLWQGVPNYLRELNEQLEENLGYKLPVEFVPVRFTSWMGGDRDGNPNVTADITRHVLLLSRWKATDLFLKDIQVLVSELSMVEATPELLALVGEEGAAEPYRYLMKNLRSRLMATQAWLEARLKGEELPKPEGLLTQNEELWEPLYACYQSLQACGMGIIANGDLLDTLRRVKCFGVPLVRIDIRQESTRHTEALGELTRYLGIGDYESWSEADKQAFLIRELNSKRPLLPRNWQPSAETREVLDTCQVIAEAPQGSIAAYVISMAKTPSDVLAVHLLLKEAGIGFAMPVAPLFETLDDLNNANDVMTQLLNIDWYRGLIQGKQMVMIGYSDSAKDAGVMAASWAQYQAQDALIKTCEKAGIELTLFHGRGGSIGRGGAPAHAALLSQPPGSLKGGLRVTEQGEMIRFKYGLPEITVSSLSLYTGAILEANLLPPPEPKESWRRIMDELSVISCDLYRGYVRENKDFVPYFRSATPEQELGKLPLGSRPAKRRPTGGVESLRAIPWIFAWTQNRLMLPAWLGAGTALQKVVEDGKQSELEAMCRDWPFFSTRLGMLEMVFAKADLWLAEYYDQRLVDKALWPLGKELRNLQEEDIKVVLAIANDSHLMADLPWIAESIQLRNIYTDPLNVLQAELLHRSRQAEKEGHEPDPRVEQALMVTIAGIAAGMRNTG</sequence>
<protein>
    <recommendedName>
        <fullName evidence="1">Phosphoenolpyruvate carboxylase</fullName>
        <shortName evidence="1">PEPC</shortName>
        <shortName evidence="1">PEPCase</shortName>
        <ecNumber evidence="1">4.1.1.31</ecNumber>
    </recommendedName>
</protein>
<evidence type="ECO:0000255" key="1">
    <source>
        <dbReference type="HAMAP-Rule" id="MF_00595"/>
    </source>
</evidence>
<proteinExistence type="inferred from homology"/>
<organism>
    <name type="scientific">Escherichia coli O7:K1 (strain IAI39 / ExPEC)</name>
    <dbReference type="NCBI Taxonomy" id="585057"/>
    <lineage>
        <taxon>Bacteria</taxon>
        <taxon>Pseudomonadati</taxon>
        <taxon>Pseudomonadota</taxon>
        <taxon>Gammaproteobacteria</taxon>
        <taxon>Enterobacterales</taxon>
        <taxon>Enterobacteriaceae</taxon>
        <taxon>Escherichia</taxon>
    </lineage>
</organism>
<accession>B7NU44</accession>
<gene>
    <name evidence="1" type="primary">ppc</name>
    <name type="ordered locus">ECIAI39_3033</name>
</gene>